<proteinExistence type="inferred from homology"/>
<dbReference type="EMBL" id="CP000026">
    <property type="protein sequence ID" value="AAV76307.1"/>
    <property type="molecule type" value="Genomic_DNA"/>
</dbReference>
<dbReference type="RefSeq" id="WP_000102230.1">
    <property type="nucleotide sequence ID" value="NC_006511.1"/>
</dbReference>
<dbReference type="SMR" id="Q5PIG4"/>
<dbReference type="KEGG" id="spt:SPA0285"/>
<dbReference type="HOGENOM" id="CLU_038009_1_2_6"/>
<dbReference type="Proteomes" id="UP000008185">
    <property type="component" value="Chromosome"/>
</dbReference>
<dbReference type="GO" id="GO:0005829">
    <property type="term" value="C:cytosol"/>
    <property type="evidence" value="ECO:0007669"/>
    <property type="project" value="TreeGrafter"/>
</dbReference>
<dbReference type="GO" id="GO:0005886">
    <property type="term" value="C:plasma membrane"/>
    <property type="evidence" value="ECO:0007669"/>
    <property type="project" value="UniProtKB-SubCell"/>
</dbReference>
<dbReference type="GO" id="GO:0005525">
    <property type="term" value="F:GTP binding"/>
    <property type="evidence" value="ECO:0007669"/>
    <property type="project" value="UniProtKB-UniRule"/>
</dbReference>
<dbReference type="GO" id="GO:0003924">
    <property type="term" value="F:GTPase activity"/>
    <property type="evidence" value="ECO:0007669"/>
    <property type="project" value="UniProtKB-UniRule"/>
</dbReference>
<dbReference type="GO" id="GO:0043024">
    <property type="term" value="F:ribosomal small subunit binding"/>
    <property type="evidence" value="ECO:0007669"/>
    <property type="project" value="TreeGrafter"/>
</dbReference>
<dbReference type="GO" id="GO:0070181">
    <property type="term" value="F:small ribosomal subunit rRNA binding"/>
    <property type="evidence" value="ECO:0007669"/>
    <property type="project" value="UniProtKB-UniRule"/>
</dbReference>
<dbReference type="GO" id="GO:0000028">
    <property type="term" value="P:ribosomal small subunit assembly"/>
    <property type="evidence" value="ECO:0007669"/>
    <property type="project" value="TreeGrafter"/>
</dbReference>
<dbReference type="CDD" id="cd04163">
    <property type="entry name" value="Era"/>
    <property type="match status" value="1"/>
</dbReference>
<dbReference type="CDD" id="cd22534">
    <property type="entry name" value="KH-II_Era"/>
    <property type="match status" value="1"/>
</dbReference>
<dbReference type="FunFam" id="3.30.300.20:FF:000003">
    <property type="entry name" value="GTPase Era"/>
    <property type="match status" value="1"/>
</dbReference>
<dbReference type="FunFam" id="3.40.50.300:FF:000094">
    <property type="entry name" value="GTPase Era"/>
    <property type="match status" value="1"/>
</dbReference>
<dbReference type="Gene3D" id="3.30.300.20">
    <property type="match status" value="1"/>
</dbReference>
<dbReference type="Gene3D" id="3.40.50.300">
    <property type="entry name" value="P-loop containing nucleotide triphosphate hydrolases"/>
    <property type="match status" value="1"/>
</dbReference>
<dbReference type="HAMAP" id="MF_00367">
    <property type="entry name" value="GTPase_Era"/>
    <property type="match status" value="1"/>
</dbReference>
<dbReference type="InterPro" id="IPR030388">
    <property type="entry name" value="G_ERA_dom"/>
</dbReference>
<dbReference type="InterPro" id="IPR006073">
    <property type="entry name" value="GTP-bd"/>
</dbReference>
<dbReference type="InterPro" id="IPR005662">
    <property type="entry name" value="GTPase_Era-like"/>
</dbReference>
<dbReference type="InterPro" id="IPR015946">
    <property type="entry name" value="KH_dom-like_a/b"/>
</dbReference>
<dbReference type="InterPro" id="IPR004044">
    <property type="entry name" value="KH_dom_type_2"/>
</dbReference>
<dbReference type="InterPro" id="IPR009019">
    <property type="entry name" value="KH_sf_prok-type"/>
</dbReference>
<dbReference type="InterPro" id="IPR027417">
    <property type="entry name" value="P-loop_NTPase"/>
</dbReference>
<dbReference type="InterPro" id="IPR005225">
    <property type="entry name" value="Small_GTP-bd"/>
</dbReference>
<dbReference type="NCBIfam" id="TIGR00436">
    <property type="entry name" value="era"/>
    <property type="match status" value="1"/>
</dbReference>
<dbReference type="NCBIfam" id="NF000908">
    <property type="entry name" value="PRK00089.1"/>
    <property type="match status" value="1"/>
</dbReference>
<dbReference type="NCBIfam" id="TIGR00231">
    <property type="entry name" value="small_GTP"/>
    <property type="match status" value="1"/>
</dbReference>
<dbReference type="PANTHER" id="PTHR42698">
    <property type="entry name" value="GTPASE ERA"/>
    <property type="match status" value="1"/>
</dbReference>
<dbReference type="PANTHER" id="PTHR42698:SF1">
    <property type="entry name" value="GTPASE ERA, MITOCHONDRIAL"/>
    <property type="match status" value="1"/>
</dbReference>
<dbReference type="Pfam" id="PF07650">
    <property type="entry name" value="KH_2"/>
    <property type="match status" value="1"/>
</dbReference>
<dbReference type="Pfam" id="PF01926">
    <property type="entry name" value="MMR_HSR1"/>
    <property type="match status" value="1"/>
</dbReference>
<dbReference type="SUPFAM" id="SSF52540">
    <property type="entry name" value="P-loop containing nucleoside triphosphate hydrolases"/>
    <property type="match status" value="1"/>
</dbReference>
<dbReference type="SUPFAM" id="SSF54814">
    <property type="entry name" value="Prokaryotic type KH domain (KH-domain type II)"/>
    <property type="match status" value="1"/>
</dbReference>
<dbReference type="PROSITE" id="PS51713">
    <property type="entry name" value="G_ERA"/>
    <property type="match status" value="1"/>
</dbReference>
<dbReference type="PROSITE" id="PS50823">
    <property type="entry name" value="KH_TYPE_2"/>
    <property type="match status" value="1"/>
</dbReference>
<evidence type="ECO:0000255" key="1">
    <source>
        <dbReference type="HAMAP-Rule" id="MF_00367"/>
    </source>
</evidence>
<evidence type="ECO:0000255" key="2">
    <source>
        <dbReference type="PROSITE-ProRule" id="PRU01050"/>
    </source>
</evidence>
<accession>Q5PIG4</accession>
<feature type="chain" id="PRO_1000079732" description="GTPase Era">
    <location>
        <begin position="1"/>
        <end position="301"/>
    </location>
</feature>
<feature type="domain" description="Era-type G" evidence="2">
    <location>
        <begin position="7"/>
        <end position="175"/>
    </location>
</feature>
<feature type="domain" description="KH type-2" evidence="1">
    <location>
        <begin position="206"/>
        <end position="283"/>
    </location>
</feature>
<feature type="region of interest" description="G1" evidence="2">
    <location>
        <begin position="15"/>
        <end position="22"/>
    </location>
</feature>
<feature type="region of interest" description="G2" evidence="2">
    <location>
        <begin position="41"/>
        <end position="45"/>
    </location>
</feature>
<feature type="region of interest" description="G3" evidence="2">
    <location>
        <begin position="62"/>
        <end position="65"/>
    </location>
</feature>
<feature type="region of interest" description="G4" evidence="2">
    <location>
        <begin position="124"/>
        <end position="127"/>
    </location>
</feature>
<feature type="region of interest" description="G5" evidence="2">
    <location>
        <begin position="154"/>
        <end position="156"/>
    </location>
</feature>
<feature type="binding site" evidence="1">
    <location>
        <begin position="15"/>
        <end position="22"/>
    </location>
    <ligand>
        <name>GTP</name>
        <dbReference type="ChEBI" id="CHEBI:37565"/>
    </ligand>
</feature>
<feature type="binding site" evidence="1">
    <location>
        <begin position="62"/>
        <end position="66"/>
    </location>
    <ligand>
        <name>GTP</name>
        <dbReference type="ChEBI" id="CHEBI:37565"/>
    </ligand>
</feature>
<feature type="binding site" evidence="1">
    <location>
        <begin position="124"/>
        <end position="127"/>
    </location>
    <ligand>
        <name>GTP</name>
        <dbReference type="ChEBI" id="CHEBI:37565"/>
    </ligand>
</feature>
<comment type="function">
    <text evidence="1">An essential GTPase that binds both GDP and GTP, with rapid nucleotide exchange. Plays a role in 16S rRNA processing and 30S ribosomal subunit biogenesis and possibly also in cell cycle regulation and energy metabolism.</text>
</comment>
<comment type="subunit">
    <text evidence="1">Monomer.</text>
</comment>
<comment type="subcellular location">
    <subcellularLocation>
        <location>Cytoplasm</location>
    </subcellularLocation>
    <subcellularLocation>
        <location evidence="1">Cell inner membrane</location>
        <topology evidence="1">Peripheral membrane protein</topology>
    </subcellularLocation>
</comment>
<comment type="similarity">
    <text evidence="1 2">Belongs to the TRAFAC class TrmE-Era-EngA-EngB-Septin-like GTPase superfamily. Era GTPase family.</text>
</comment>
<name>ERA_SALPA</name>
<protein>
    <recommendedName>
        <fullName evidence="1">GTPase Era</fullName>
    </recommendedName>
</protein>
<reference key="1">
    <citation type="journal article" date="2004" name="Nat. Genet.">
        <title>Comparison of genome degradation in Paratyphi A and Typhi, human-restricted serovars of Salmonella enterica that cause typhoid.</title>
        <authorList>
            <person name="McClelland M."/>
            <person name="Sanderson K.E."/>
            <person name="Clifton S.W."/>
            <person name="Latreille P."/>
            <person name="Porwollik S."/>
            <person name="Sabo A."/>
            <person name="Meyer R."/>
            <person name="Bieri T."/>
            <person name="Ozersky P."/>
            <person name="McLellan M."/>
            <person name="Harkins C.R."/>
            <person name="Wang C."/>
            <person name="Nguyen C."/>
            <person name="Berghoff A."/>
            <person name="Elliott G."/>
            <person name="Kohlberg S."/>
            <person name="Strong C."/>
            <person name="Du F."/>
            <person name="Carter J."/>
            <person name="Kremizki C."/>
            <person name="Layman D."/>
            <person name="Leonard S."/>
            <person name="Sun H."/>
            <person name="Fulton L."/>
            <person name="Nash W."/>
            <person name="Miner T."/>
            <person name="Minx P."/>
            <person name="Delehaunty K."/>
            <person name="Fronick C."/>
            <person name="Magrini V."/>
            <person name="Nhan M."/>
            <person name="Warren W."/>
            <person name="Florea L."/>
            <person name="Spieth J."/>
            <person name="Wilson R.K."/>
        </authorList>
    </citation>
    <scope>NUCLEOTIDE SEQUENCE [LARGE SCALE GENOMIC DNA]</scope>
    <source>
        <strain>ATCC 9150 / SARB42</strain>
    </source>
</reference>
<organism>
    <name type="scientific">Salmonella paratyphi A (strain ATCC 9150 / SARB42)</name>
    <dbReference type="NCBI Taxonomy" id="295319"/>
    <lineage>
        <taxon>Bacteria</taxon>
        <taxon>Pseudomonadati</taxon>
        <taxon>Pseudomonadota</taxon>
        <taxon>Gammaproteobacteria</taxon>
        <taxon>Enterobacterales</taxon>
        <taxon>Enterobacteriaceae</taxon>
        <taxon>Salmonella</taxon>
    </lineage>
</organism>
<gene>
    <name evidence="1" type="primary">era</name>
    <name type="ordered locus">SPA0285</name>
</gene>
<keyword id="KW-0997">Cell inner membrane</keyword>
<keyword id="KW-1003">Cell membrane</keyword>
<keyword id="KW-0963">Cytoplasm</keyword>
<keyword id="KW-0342">GTP-binding</keyword>
<keyword id="KW-0472">Membrane</keyword>
<keyword id="KW-0547">Nucleotide-binding</keyword>
<keyword id="KW-0690">Ribosome biogenesis</keyword>
<keyword id="KW-0694">RNA-binding</keyword>
<keyword id="KW-0699">rRNA-binding</keyword>
<sequence length="301" mass="33854">MSTDKTYCGFIAIVGRPNVGKSTLLNKLLGQKISITSRKAQTTRHRIVGIHTEGPYQAIYVDTPGLHMEEKRAINRLMNKAASSSIGDVELVIFVVEGTRWTPDDEMVLNKLRDGKAPVILAVNKVDNVQEKADLLPHLQFLASQMNFLDIVPISAETGMNVDTIAGIVRKHLPEAIHHFPEDYITDRSQRFMASEIIREKLMRFLGAELPYSVTVEIERFVTNERGGYDINGLILVEREGQKKMVIGNKGAKIKTIGIEARKDMQEMFEAPVHLELWVKVKSGWADDERALRSLGYVDDL</sequence>